<reference key="1">
    <citation type="journal article" date="2009" name="Infect. Immun.">
        <title>Comparative genomics reveal extensive transposon-mediated genomic plasticity and diversity among potential effector proteins within the genus Coxiella.</title>
        <authorList>
            <person name="Beare P.A."/>
            <person name="Unsworth N."/>
            <person name="Andoh M."/>
            <person name="Voth D.E."/>
            <person name="Omsland A."/>
            <person name="Gilk S.D."/>
            <person name="Williams K.P."/>
            <person name="Sobral B.W."/>
            <person name="Kupko J.J. III"/>
            <person name="Porcella S.F."/>
            <person name="Samuel J.E."/>
            <person name="Heinzen R.A."/>
        </authorList>
    </citation>
    <scope>NUCLEOTIDE SEQUENCE [LARGE SCALE GENOMIC DNA]</scope>
    <source>
        <strain>CbuG_Q212</strain>
    </source>
</reference>
<organism>
    <name type="scientific">Coxiella burnetii (strain CbuG_Q212)</name>
    <name type="common">Coxiella burnetii (strain Q212)</name>
    <dbReference type="NCBI Taxonomy" id="434923"/>
    <lineage>
        <taxon>Bacteria</taxon>
        <taxon>Pseudomonadati</taxon>
        <taxon>Pseudomonadota</taxon>
        <taxon>Gammaproteobacteria</taxon>
        <taxon>Legionellales</taxon>
        <taxon>Coxiellaceae</taxon>
        <taxon>Coxiella</taxon>
    </lineage>
</organism>
<proteinExistence type="inferred from homology"/>
<feature type="chain" id="PRO_1000090145" description="SsrA-binding protein">
    <location>
        <begin position="1"/>
        <end position="159"/>
    </location>
</feature>
<name>SSRP_COXB2</name>
<comment type="function">
    <text evidence="1">Required for rescue of stalled ribosomes mediated by trans-translation. Binds to transfer-messenger RNA (tmRNA), required for stable association of tmRNA with ribosomes. tmRNA and SmpB together mimic tRNA shape, replacing the anticodon stem-loop with SmpB. tmRNA is encoded by the ssrA gene; the 2 termini fold to resemble tRNA(Ala) and it encodes a 'tag peptide', a short internal open reading frame. During trans-translation Ala-aminoacylated tmRNA acts like a tRNA, entering the A-site of stalled ribosomes, displacing the stalled mRNA. The ribosome then switches to translate the ORF on the tmRNA; the nascent peptide is terminated with the 'tag peptide' encoded by the tmRNA and targeted for degradation. The ribosome is freed to recommence translation, which seems to be the essential function of trans-translation.</text>
</comment>
<comment type="subcellular location">
    <subcellularLocation>
        <location evidence="1">Cytoplasm</location>
    </subcellularLocation>
    <text evidence="1">The tmRNA-SmpB complex associates with stalled 70S ribosomes.</text>
</comment>
<comment type="similarity">
    <text evidence="1">Belongs to the SmpB family.</text>
</comment>
<accession>B6IZH7</accession>
<gene>
    <name evidence="1" type="primary">smpB</name>
    <name type="ordered locus">CbuG_0704</name>
</gene>
<sequence length="159" mass="18429">MNKQISKKPAQRTIALNKKALHDYYVEQRFEAGLVLEGWEVKSIRAGRVQLRDSYVVFKGGEAWLIGAHLSPLPNVAEYMKADPQRSRKLLLNKREIGKLFGAVQKQGLTVVPLDLHWHKNHVKVEIALAKGKKTHDKRETIKRREWEREKHRVLKSHG</sequence>
<protein>
    <recommendedName>
        <fullName evidence="1">SsrA-binding protein</fullName>
    </recommendedName>
    <alternativeName>
        <fullName evidence="1">Small protein B</fullName>
    </alternativeName>
</protein>
<keyword id="KW-0963">Cytoplasm</keyword>
<keyword id="KW-0694">RNA-binding</keyword>
<dbReference type="EMBL" id="CP001019">
    <property type="protein sequence ID" value="ACJ18105.1"/>
    <property type="molecule type" value="Genomic_DNA"/>
</dbReference>
<dbReference type="RefSeq" id="WP_011997064.1">
    <property type="nucleotide sequence ID" value="NC_011527.1"/>
</dbReference>
<dbReference type="SMR" id="B6IZH7"/>
<dbReference type="KEGG" id="cbg:CbuG_0704"/>
<dbReference type="HOGENOM" id="CLU_108953_3_0_6"/>
<dbReference type="GO" id="GO:0005829">
    <property type="term" value="C:cytosol"/>
    <property type="evidence" value="ECO:0007669"/>
    <property type="project" value="TreeGrafter"/>
</dbReference>
<dbReference type="GO" id="GO:0003723">
    <property type="term" value="F:RNA binding"/>
    <property type="evidence" value="ECO:0007669"/>
    <property type="project" value="UniProtKB-UniRule"/>
</dbReference>
<dbReference type="GO" id="GO:0070929">
    <property type="term" value="P:trans-translation"/>
    <property type="evidence" value="ECO:0007669"/>
    <property type="project" value="UniProtKB-UniRule"/>
</dbReference>
<dbReference type="CDD" id="cd09294">
    <property type="entry name" value="SmpB"/>
    <property type="match status" value="1"/>
</dbReference>
<dbReference type="Gene3D" id="2.40.280.10">
    <property type="match status" value="1"/>
</dbReference>
<dbReference type="HAMAP" id="MF_00023">
    <property type="entry name" value="SmpB"/>
    <property type="match status" value="1"/>
</dbReference>
<dbReference type="InterPro" id="IPR023620">
    <property type="entry name" value="SmpB"/>
</dbReference>
<dbReference type="InterPro" id="IPR000037">
    <property type="entry name" value="SsrA-bd_prot"/>
</dbReference>
<dbReference type="InterPro" id="IPR020081">
    <property type="entry name" value="SsrA-bd_prot_CS"/>
</dbReference>
<dbReference type="NCBIfam" id="NF003843">
    <property type="entry name" value="PRK05422.1"/>
    <property type="match status" value="1"/>
</dbReference>
<dbReference type="NCBIfam" id="TIGR00086">
    <property type="entry name" value="smpB"/>
    <property type="match status" value="1"/>
</dbReference>
<dbReference type="PANTHER" id="PTHR30308:SF2">
    <property type="entry name" value="SSRA-BINDING PROTEIN"/>
    <property type="match status" value="1"/>
</dbReference>
<dbReference type="PANTHER" id="PTHR30308">
    <property type="entry name" value="TMRNA-BINDING COMPONENT OF TRANS-TRANSLATION TAGGING COMPLEX"/>
    <property type="match status" value="1"/>
</dbReference>
<dbReference type="Pfam" id="PF01668">
    <property type="entry name" value="SmpB"/>
    <property type="match status" value="1"/>
</dbReference>
<dbReference type="SUPFAM" id="SSF74982">
    <property type="entry name" value="Small protein B (SmpB)"/>
    <property type="match status" value="1"/>
</dbReference>
<dbReference type="PROSITE" id="PS01317">
    <property type="entry name" value="SSRP"/>
    <property type="match status" value="1"/>
</dbReference>
<evidence type="ECO:0000255" key="1">
    <source>
        <dbReference type="HAMAP-Rule" id="MF_00023"/>
    </source>
</evidence>